<sequence length="120" mass="12926">MERTSTSLLFLLSLLIIFASAVNQIRAQTCDENLSSCENCDQRCKAKHGPSSVSKCNGPDGTCGCASFKPAKLCIGATDMCTDKCPTSCCDRQCAIKYKNGKGGCVDYAGYRMCICEYTC</sequence>
<organism evidence="3">
    <name type="scientific">Arabidopsis thaliana</name>
    <name type="common">Mouse-ear cress</name>
    <dbReference type="NCBI Taxonomy" id="3702"/>
    <lineage>
        <taxon>Eukaryota</taxon>
        <taxon>Viridiplantae</taxon>
        <taxon>Streptophyta</taxon>
        <taxon>Embryophyta</taxon>
        <taxon>Tracheophyta</taxon>
        <taxon>Spermatophyta</taxon>
        <taxon>Magnoliopsida</taxon>
        <taxon>eudicotyledons</taxon>
        <taxon>Gunneridae</taxon>
        <taxon>Pentapetalae</taxon>
        <taxon>rosids</taxon>
        <taxon>malvids</taxon>
        <taxon>Brassicales</taxon>
        <taxon>Brassicaceae</taxon>
        <taxon>Camelineae</taxon>
        <taxon>Arabidopsis</taxon>
    </lineage>
</organism>
<proteinExistence type="inferred from homology"/>
<dbReference type="EMBL" id="AB023032">
    <property type="status" value="NOT_ANNOTATED_CDS"/>
    <property type="molecule type" value="Genomic_DNA"/>
</dbReference>
<dbReference type="EMBL" id="CP002688">
    <property type="protein sequence ID" value="AED94787.1"/>
    <property type="molecule type" value="Genomic_DNA"/>
</dbReference>
<dbReference type="RefSeq" id="NP_001031996.1">
    <property type="nucleotide sequence ID" value="NM_001036919.1"/>
</dbReference>
<dbReference type="PaxDb" id="3702-AT5G42242.1"/>
<dbReference type="ProteomicsDB" id="224033"/>
<dbReference type="EnsemblPlants" id="AT5G42242.1">
    <property type="protein sequence ID" value="AT5G42242.1"/>
    <property type="gene ID" value="AT5G42242"/>
</dbReference>
<dbReference type="GeneID" id="3771402"/>
<dbReference type="Gramene" id="AT5G42242.1">
    <property type="protein sequence ID" value="AT5G42242.1"/>
    <property type="gene ID" value="AT5G42242"/>
</dbReference>
<dbReference type="KEGG" id="ath:AT5G42242"/>
<dbReference type="Araport" id="AT5G42242"/>
<dbReference type="TAIR" id="AT5G42242">
    <property type="gene designation" value="LCR57"/>
</dbReference>
<dbReference type="eggNOG" id="ENOG502R1UC">
    <property type="taxonomic scope" value="Eukaryota"/>
</dbReference>
<dbReference type="HOGENOM" id="CLU_158287_1_1_1"/>
<dbReference type="InParanoid" id="P82771"/>
<dbReference type="OMA" id="RMCICEY"/>
<dbReference type="PhylomeDB" id="P82771"/>
<dbReference type="PRO" id="PR:P82771"/>
<dbReference type="Proteomes" id="UP000006548">
    <property type="component" value="Chromosome 5"/>
</dbReference>
<dbReference type="ExpressionAtlas" id="P82771">
    <property type="expression patterns" value="baseline and differential"/>
</dbReference>
<dbReference type="GO" id="GO:0005576">
    <property type="term" value="C:extracellular region"/>
    <property type="evidence" value="ECO:0007669"/>
    <property type="project" value="UniProtKB-SubCell"/>
</dbReference>
<dbReference type="GO" id="GO:0050832">
    <property type="term" value="P:defense response to fungus"/>
    <property type="evidence" value="ECO:0007669"/>
    <property type="project" value="UniProtKB-KW"/>
</dbReference>
<dbReference type="GO" id="GO:0031640">
    <property type="term" value="P:killing of cells of another organism"/>
    <property type="evidence" value="ECO:0007669"/>
    <property type="project" value="UniProtKB-KW"/>
</dbReference>
<dbReference type="InterPro" id="IPR039641">
    <property type="entry name" value="LCR"/>
</dbReference>
<dbReference type="PANTHER" id="PTHR36788:SF4">
    <property type="entry name" value="DEFENSIN-LIKE PROTEIN 181-RELATED"/>
    <property type="match status" value="1"/>
</dbReference>
<dbReference type="PANTHER" id="PTHR36788">
    <property type="entry name" value="DEFENSIN-LIKE PROTEIN 183"/>
    <property type="match status" value="1"/>
</dbReference>
<comment type="subcellular location">
    <subcellularLocation>
        <location evidence="1">Secreted</location>
    </subcellularLocation>
</comment>
<comment type="similarity">
    <text evidence="3">Belongs to the DEFL family.</text>
</comment>
<comment type="caution">
    <text evidence="3">Contains 7 disulfide bonds instead of the 4 disulfide bonds, which are conserved features of the family.</text>
</comment>
<protein>
    <recommendedName>
        <fullName>Putative defensin-like protein 179</fullName>
    </recommendedName>
    <alternativeName>
        <fullName>Putative low-molecular-weight cysteine-rich protein 57</fullName>
        <shortName>Protein LCR57</shortName>
    </alternativeName>
</protein>
<accession>P82771</accession>
<reference evidence="3" key="1">
    <citation type="journal article" date="2000" name="DNA Res.">
        <title>Structural analysis of Arabidopsis thaliana chromosome 5. X. Sequence features of the regions of 3,076,755 bp covered by sixty P1 and TAC clones.</title>
        <authorList>
            <person name="Sato S."/>
            <person name="Nakamura Y."/>
            <person name="Kaneko T."/>
            <person name="Katoh T."/>
            <person name="Asamizu E."/>
            <person name="Kotani H."/>
            <person name="Tabata S."/>
        </authorList>
    </citation>
    <scope>NUCLEOTIDE SEQUENCE [LARGE SCALE GENOMIC DNA]</scope>
    <source>
        <strain>cv. Columbia</strain>
    </source>
</reference>
<reference key="2">
    <citation type="journal article" date="2017" name="Plant J.">
        <title>Araport11: a complete reannotation of the Arabidopsis thaliana reference genome.</title>
        <authorList>
            <person name="Cheng C.Y."/>
            <person name="Krishnakumar V."/>
            <person name="Chan A.P."/>
            <person name="Thibaud-Nissen F."/>
            <person name="Schobel S."/>
            <person name="Town C.D."/>
        </authorList>
    </citation>
    <scope>GENOME REANNOTATION</scope>
    <source>
        <strain>cv. Columbia</strain>
    </source>
</reference>
<reference evidence="3" key="3">
    <citation type="journal article" date="2001" name="Plant Mol. Biol.">
        <title>Two large Arabidopsis thaliana gene families are homologous to the Brassica gene superfamily that encodes pollen coat proteins and the male component of the self-incompatibility response.</title>
        <authorList>
            <person name="Vanoosthuyse V."/>
            <person name="Miege C."/>
            <person name="Dumas C."/>
            <person name="Cock J.M."/>
        </authorList>
    </citation>
    <scope>IDENTIFICATION</scope>
</reference>
<reference key="4">
    <citation type="journal article" date="2005" name="Plant Physiol.">
        <title>Genome organization of more than 300 defensin-like genes in Arabidopsis.</title>
        <authorList>
            <person name="Silverstein K.A.T."/>
            <person name="Graham M.A."/>
            <person name="Paape T.D."/>
            <person name="VandenBosch K.A."/>
        </authorList>
    </citation>
    <scope>GENE FAMILY</scope>
</reference>
<name>DF179_ARATH</name>
<gene>
    <name type="primary">LCR57</name>
    <name type="ordered locus">At5g42242</name>
    <name type="ORF">K5J14</name>
</gene>
<feature type="signal peptide" evidence="2">
    <location>
        <begin position="1"/>
        <end position="27"/>
    </location>
</feature>
<feature type="chain" id="PRO_0000017295" description="Putative defensin-like protein 179">
    <location>
        <begin position="28"/>
        <end position="120"/>
    </location>
</feature>
<feature type="disulfide bond" evidence="1">
    <location>
        <begin position="37"/>
        <end position="56"/>
    </location>
</feature>
<feature type="disulfide bond" evidence="1">
    <location>
        <begin position="40"/>
        <end position="63"/>
    </location>
</feature>
<feature type="disulfide bond" evidence="1">
    <location>
        <begin position="44"/>
        <end position="65"/>
    </location>
</feature>
<feature type="disulfide bond" evidence="1">
    <location>
        <begin position="74"/>
        <end position="120"/>
    </location>
</feature>
<feature type="disulfide bond" evidence="1">
    <location>
        <begin position="85"/>
        <end position="105"/>
    </location>
</feature>
<feature type="disulfide bond" evidence="1">
    <location>
        <begin position="90"/>
        <end position="114"/>
    </location>
</feature>
<feature type="disulfide bond" evidence="1">
    <location>
        <begin position="94"/>
        <end position="116"/>
    </location>
</feature>
<keyword id="KW-0929">Antimicrobial</keyword>
<keyword id="KW-1015">Disulfide bond</keyword>
<keyword id="KW-0295">Fungicide</keyword>
<keyword id="KW-0611">Plant defense</keyword>
<keyword id="KW-1185">Reference proteome</keyword>
<keyword id="KW-0964">Secreted</keyword>
<keyword id="KW-0732">Signal</keyword>
<evidence type="ECO:0000250" key="1"/>
<evidence type="ECO:0000255" key="2"/>
<evidence type="ECO:0000305" key="3"/>